<name>VSP01_TRIST</name>
<protein>
    <recommendedName>
        <fullName>Snake venom serine protease KN1</fullName>
        <shortName>SVSP</shortName>
        <ecNumber>3.4.21.-</ecNumber>
    </recommendedName>
</protein>
<feature type="signal peptide" evidence="2">
    <location>
        <begin position="1"/>
        <end position="18"/>
    </location>
</feature>
<feature type="propeptide" id="PRO_0000295826" evidence="1">
    <location>
        <begin position="19"/>
        <end position="24"/>
    </location>
</feature>
<feature type="chain" id="PRO_5000061216" description="Snake venom serine protease KN1">
    <location>
        <begin position="25"/>
        <end position="257"/>
    </location>
</feature>
<feature type="domain" description="Peptidase S1" evidence="3">
    <location>
        <begin position="25"/>
        <end position="248"/>
    </location>
</feature>
<feature type="active site" description="Charge relay system" evidence="1">
    <location>
        <position position="64"/>
    </location>
</feature>
<feature type="active site" description="Charge relay system" evidence="1">
    <location>
        <position position="109"/>
    </location>
</feature>
<feature type="active site" description="Charge relay system" evidence="1">
    <location>
        <position position="203"/>
    </location>
</feature>
<feature type="glycosylation site" description="N-linked (GlcNAc...) asparagine" evidence="2">
    <location>
        <position position="102"/>
    </location>
</feature>
<feature type="glycosylation site" description="N-linked (GlcNAc...) asparagine" evidence="2">
    <location>
        <position position="120"/>
    </location>
</feature>
<feature type="glycosylation site" description="N-linked (GlcNAc...) asparagine" evidence="2">
    <location>
        <position position="121"/>
    </location>
</feature>
<feature type="disulfide bond" evidence="3">
    <location>
        <begin position="31"/>
        <end position="162"/>
    </location>
</feature>
<feature type="disulfide bond" evidence="3">
    <location>
        <begin position="49"/>
        <end position="65"/>
    </location>
</feature>
<feature type="disulfide bond" evidence="3">
    <location>
        <begin position="141"/>
        <end position="209"/>
    </location>
</feature>
<feature type="disulfide bond" evidence="3">
    <location>
        <begin position="173"/>
        <end position="188"/>
    </location>
</feature>
<feature type="disulfide bond" evidence="3">
    <location>
        <begin position="199"/>
        <end position="224"/>
    </location>
</feature>
<organism>
    <name type="scientific">Trimeresurus stejnegeri</name>
    <name type="common">Chinese green tree viper</name>
    <name type="synonym">Viridovipera stejnegeri</name>
    <dbReference type="NCBI Taxonomy" id="39682"/>
    <lineage>
        <taxon>Eukaryota</taxon>
        <taxon>Metazoa</taxon>
        <taxon>Chordata</taxon>
        <taxon>Craniata</taxon>
        <taxon>Vertebrata</taxon>
        <taxon>Euteleostomi</taxon>
        <taxon>Lepidosauria</taxon>
        <taxon>Squamata</taxon>
        <taxon>Bifurcata</taxon>
        <taxon>Unidentata</taxon>
        <taxon>Episquamata</taxon>
        <taxon>Toxicofera</taxon>
        <taxon>Serpentes</taxon>
        <taxon>Colubroidea</taxon>
        <taxon>Viperidae</taxon>
        <taxon>Crotalinae</taxon>
        <taxon>Trimeresurus</taxon>
    </lineage>
</organism>
<comment type="function">
    <text evidence="1">Snake venom serine protease that may act in the hemostasis system of the prey.</text>
</comment>
<comment type="subunit">
    <text evidence="1">Monomer.</text>
</comment>
<comment type="subcellular location">
    <subcellularLocation>
        <location evidence="1">Secreted</location>
    </subcellularLocation>
</comment>
<comment type="tissue specificity">
    <text>Expressed by the venom gland.</text>
</comment>
<comment type="similarity">
    <text evidence="3">Belongs to the peptidase S1 family. Snake venom subfamily.</text>
</comment>
<reference key="1">
    <citation type="submission" date="2001-06" db="EMBL/GenBank/DDBJ databases">
        <title>Identification of geographic variations and cloning of venom proteins of Trimeresurus stejnegeri: serine proteases and phospholipases.</title>
        <authorList>
            <person name="Tsai I.-H."/>
            <person name="Wang Y.-M."/>
        </authorList>
    </citation>
    <scope>NUCLEOTIDE SEQUENCE [MRNA]</scope>
    <source>
        <tissue>Venom gland</tissue>
    </source>
</reference>
<dbReference type="EC" id="3.4.21.-"/>
<dbReference type="EMBL" id="AF395764">
    <property type="protein sequence ID" value="AAQ02894.1"/>
    <property type="molecule type" value="mRNA"/>
</dbReference>
<dbReference type="SMR" id="Q71QJ3"/>
<dbReference type="MEROPS" id="S01.497"/>
<dbReference type="GO" id="GO:0005576">
    <property type="term" value="C:extracellular region"/>
    <property type="evidence" value="ECO:0007669"/>
    <property type="project" value="UniProtKB-SubCell"/>
</dbReference>
<dbReference type="GO" id="GO:0030141">
    <property type="term" value="C:secretory granule"/>
    <property type="evidence" value="ECO:0007669"/>
    <property type="project" value="TreeGrafter"/>
</dbReference>
<dbReference type="GO" id="GO:0004252">
    <property type="term" value="F:serine-type endopeptidase activity"/>
    <property type="evidence" value="ECO:0007669"/>
    <property type="project" value="InterPro"/>
</dbReference>
<dbReference type="GO" id="GO:0090729">
    <property type="term" value="F:toxin activity"/>
    <property type="evidence" value="ECO:0007669"/>
    <property type="project" value="UniProtKB-KW"/>
</dbReference>
<dbReference type="GO" id="GO:0006508">
    <property type="term" value="P:proteolysis"/>
    <property type="evidence" value="ECO:0007669"/>
    <property type="project" value="UniProtKB-KW"/>
</dbReference>
<dbReference type="CDD" id="cd00190">
    <property type="entry name" value="Tryp_SPc"/>
    <property type="match status" value="1"/>
</dbReference>
<dbReference type="FunFam" id="2.40.10.10:FF:000158">
    <property type="entry name" value="Thrombin-like enzyme saxthrombin"/>
    <property type="match status" value="1"/>
</dbReference>
<dbReference type="FunFam" id="2.40.10.10:FF:000153">
    <property type="entry name" value="Venom plasminogen activator TSV-PA"/>
    <property type="match status" value="1"/>
</dbReference>
<dbReference type="Gene3D" id="2.40.10.10">
    <property type="entry name" value="Trypsin-like serine proteases"/>
    <property type="match status" value="2"/>
</dbReference>
<dbReference type="InterPro" id="IPR009003">
    <property type="entry name" value="Peptidase_S1_PA"/>
</dbReference>
<dbReference type="InterPro" id="IPR043504">
    <property type="entry name" value="Peptidase_S1_PA_chymotrypsin"/>
</dbReference>
<dbReference type="InterPro" id="IPR001314">
    <property type="entry name" value="Peptidase_S1A"/>
</dbReference>
<dbReference type="InterPro" id="IPR001254">
    <property type="entry name" value="Trypsin_dom"/>
</dbReference>
<dbReference type="InterPro" id="IPR018114">
    <property type="entry name" value="TRYPSIN_HIS"/>
</dbReference>
<dbReference type="InterPro" id="IPR033116">
    <property type="entry name" value="TRYPSIN_SER"/>
</dbReference>
<dbReference type="PANTHER" id="PTHR24271:SF47">
    <property type="entry name" value="KALLIKREIN-1"/>
    <property type="match status" value="1"/>
</dbReference>
<dbReference type="PANTHER" id="PTHR24271">
    <property type="entry name" value="KALLIKREIN-RELATED"/>
    <property type="match status" value="1"/>
</dbReference>
<dbReference type="Pfam" id="PF00089">
    <property type="entry name" value="Trypsin"/>
    <property type="match status" value="1"/>
</dbReference>
<dbReference type="PRINTS" id="PR00722">
    <property type="entry name" value="CHYMOTRYPSIN"/>
</dbReference>
<dbReference type="SMART" id="SM00020">
    <property type="entry name" value="Tryp_SPc"/>
    <property type="match status" value="1"/>
</dbReference>
<dbReference type="SUPFAM" id="SSF50494">
    <property type="entry name" value="Trypsin-like serine proteases"/>
    <property type="match status" value="1"/>
</dbReference>
<dbReference type="PROSITE" id="PS50240">
    <property type="entry name" value="TRYPSIN_DOM"/>
    <property type="match status" value="1"/>
</dbReference>
<dbReference type="PROSITE" id="PS00134">
    <property type="entry name" value="TRYPSIN_HIS"/>
    <property type="match status" value="1"/>
</dbReference>
<dbReference type="PROSITE" id="PS00135">
    <property type="entry name" value="TRYPSIN_SER"/>
    <property type="match status" value="1"/>
</dbReference>
<keyword id="KW-1015">Disulfide bond</keyword>
<keyword id="KW-0325">Glycoprotein</keyword>
<keyword id="KW-1199">Hemostasis impairing toxin</keyword>
<keyword id="KW-0378">Hydrolase</keyword>
<keyword id="KW-0645">Protease</keyword>
<keyword id="KW-0964">Secreted</keyword>
<keyword id="KW-0720">Serine protease</keyword>
<keyword id="KW-0732">Signal</keyword>
<keyword id="KW-0800">Toxin</keyword>
<keyword id="KW-0865">Zymogen</keyword>
<proteinExistence type="evidence at transcript level"/>
<sequence>MVLIRVLANLLILQLSYAQKSSELVVGGHPCNINEHRFLVLVYSDGIQCGGTLINKEWMLTAAHCDGKKMKLQFGLHSKNVPNKDKQTRVPKKKYFFPCSKNFTKWDKDIMLIRLNHPVNNSTHIAPLSLPSKPPSQDTVCNIMGWGTISPTKEIYPDVPHCANINIVDHAVCRAFYPGLLEKSKTLCAGILEGGKDTCQGDSGGPLICNGQIQGIVSVGGDPCAEPRVPALYTKVFDHLDWIKSIIAGNTAATCPL</sequence>
<accession>Q71QJ3</accession>
<evidence type="ECO:0000250" key="1"/>
<evidence type="ECO:0000255" key="2"/>
<evidence type="ECO:0000255" key="3">
    <source>
        <dbReference type="PROSITE-ProRule" id="PRU00274"/>
    </source>
</evidence>